<comment type="function">
    <text evidence="1">Zinc phosphodiesterase, which displays some tRNA 3'-processing endonuclease activity. Probably involved in tRNA maturation, by removing a 3'-trailer from precursor tRNA.</text>
</comment>
<comment type="catalytic activity">
    <reaction evidence="1">
        <text>Endonucleolytic cleavage of RNA, removing extra 3' nucleotides from tRNA precursor, generating 3' termini of tRNAs. A 3'-hydroxy group is left at the tRNA terminus and a 5'-phosphoryl group is left at the trailer molecule.</text>
        <dbReference type="EC" id="3.1.26.11"/>
    </reaction>
</comment>
<comment type="cofactor">
    <cofactor evidence="1">
        <name>Zn(2+)</name>
        <dbReference type="ChEBI" id="CHEBI:29105"/>
    </cofactor>
    <text evidence="1">Binds 2 Zn(2+) ions.</text>
</comment>
<comment type="subunit">
    <text evidence="1">Homodimer.</text>
</comment>
<comment type="similarity">
    <text evidence="1">Belongs to the RNase Z family.</text>
</comment>
<feature type="chain" id="PRO_0000155883" description="Ribonuclease Z">
    <location>
        <begin position="1"/>
        <end position="304"/>
    </location>
</feature>
<feature type="active site" description="Proton acceptor" evidence="1">
    <location>
        <position position="67"/>
    </location>
</feature>
<feature type="binding site" evidence="1">
    <location>
        <position position="63"/>
    </location>
    <ligand>
        <name>Zn(2+)</name>
        <dbReference type="ChEBI" id="CHEBI:29105"/>
        <label>1</label>
        <note>catalytic</note>
    </ligand>
</feature>
<feature type="binding site" evidence="1">
    <location>
        <position position="65"/>
    </location>
    <ligand>
        <name>Zn(2+)</name>
        <dbReference type="ChEBI" id="CHEBI:29105"/>
        <label>1</label>
        <note>catalytic</note>
    </ligand>
</feature>
<feature type="binding site" evidence="1">
    <location>
        <position position="67"/>
    </location>
    <ligand>
        <name>Zn(2+)</name>
        <dbReference type="ChEBI" id="CHEBI:29105"/>
        <label>2</label>
        <note>catalytic</note>
    </ligand>
</feature>
<feature type="binding site" evidence="1">
    <location>
        <position position="68"/>
    </location>
    <ligand>
        <name>Zn(2+)</name>
        <dbReference type="ChEBI" id="CHEBI:29105"/>
        <label>2</label>
        <note>catalytic</note>
    </ligand>
</feature>
<feature type="binding site" evidence="1">
    <location>
        <position position="143"/>
    </location>
    <ligand>
        <name>Zn(2+)</name>
        <dbReference type="ChEBI" id="CHEBI:29105"/>
        <label>1</label>
        <note>catalytic</note>
    </ligand>
</feature>
<feature type="binding site" evidence="1">
    <location>
        <position position="213"/>
    </location>
    <ligand>
        <name>Zn(2+)</name>
        <dbReference type="ChEBI" id="CHEBI:29105"/>
        <label>1</label>
        <note>catalytic</note>
    </ligand>
</feature>
<feature type="binding site" evidence="1">
    <location>
        <position position="213"/>
    </location>
    <ligand>
        <name>Zn(2+)</name>
        <dbReference type="ChEBI" id="CHEBI:29105"/>
        <label>2</label>
        <note>catalytic</note>
    </ligand>
</feature>
<feature type="binding site" evidence="1">
    <location>
        <position position="271"/>
    </location>
    <ligand>
        <name>Zn(2+)</name>
        <dbReference type="ChEBI" id="CHEBI:29105"/>
        <label>2</label>
        <note>catalytic</note>
    </ligand>
</feature>
<feature type="sequence conflict" description="In Ref. 1; CAA65179." evidence="2" ref="1">
    <original>EEAQSVFKPTIAANERMRIDL</original>
    <variation>GRSSKRIQANYCRQ</variation>
    <location>
        <begin position="284"/>
        <end position="304"/>
    </location>
</feature>
<keyword id="KW-0255">Endonuclease</keyword>
<keyword id="KW-0378">Hydrolase</keyword>
<keyword id="KW-0479">Metal-binding</keyword>
<keyword id="KW-0540">Nuclease</keyword>
<keyword id="KW-1185">Reference proteome</keyword>
<keyword id="KW-0819">tRNA processing</keyword>
<keyword id="KW-0862">Zinc</keyword>
<protein>
    <recommendedName>
        <fullName evidence="1">Ribonuclease Z</fullName>
        <shortName evidence="1">RNase Z</shortName>
        <ecNumber evidence="1">3.1.26.11</ecNumber>
    </recommendedName>
    <alternativeName>
        <fullName evidence="1">tRNA 3 endonuclease</fullName>
    </alternativeName>
    <alternativeName>
        <fullName evidence="1">tRNase Z</fullName>
    </alternativeName>
</protein>
<organism>
    <name type="scientific">Porphyromonas gingivalis (strain ATCC BAA-308 / W83)</name>
    <dbReference type="NCBI Taxonomy" id="242619"/>
    <lineage>
        <taxon>Bacteria</taxon>
        <taxon>Pseudomonadati</taxon>
        <taxon>Bacteroidota</taxon>
        <taxon>Bacteroidia</taxon>
        <taxon>Bacteroidales</taxon>
        <taxon>Porphyromonadaceae</taxon>
        <taxon>Porphyromonas</taxon>
    </lineage>
</organism>
<gene>
    <name evidence="1" type="primary">rnz</name>
    <name type="ordered locus">PG_0739</name>
</gene>
<proteinExistence type="inferred from homology"/>
<reference key="1">
    <citation type="submission" date="1996-05" db="EMBL/GenBank/DDBJ databases">
        <authorList>
            <person name="Rigg G.P."/>
            <person name="Roberts I.S."/>
        </authorList>
    </citation>
    <scope>NUCLEOTIDE SEQUENCE [GENOMIC DNA]</scope>
    <source>
        <strain>ATCC BAA-308 / W83</strain>
    </source>
</reference>
<reference key="2">
    <citation type="journal article" date="2003" name="J. Bacteriol.">
        <title>Complete genome sequence of the oral pathogenic bacterium Porphyromonas gingivalis strain W83.</title>
        <authorList>
            <person name="Nelson K.E."/>
            <person name="Fleischmann R.D."/>
            <person name="DeBoy R.T."/>
            <person name="Paulsen I.T."/>
            <person name="Fouts D.E."/>
            <person name="Eisen J.A."/>
            <person name="Daugherty S.C."/>
            <person name="Dodson R.J."/>
            <person name="Durkin A.S."/>
            <person name="Gwinn M.L."/>
            <person name="Haft D.H."/>
            <person name="Kolonay J.F."/>
            <person name="Nelson W.C."/>
            <person name="Mason T.M."/>
            <person name="Tallon L."/>
            <person name="Gray J."/>
            <person name="Granger D."/>
            <person name="Tettelin H."/>
            <person name="Dong H."/>
            <person name="Galvin J.L."/>
            <person name="Duncan M.J."/>
            <person name="Dewhirst F.E."/>
            <person name="Fraser C.M."/>
        </authorList>
    </citation>
    <scope>NUCLEOTIDE SEQUENCE [LARGE SCALE GENOMIC DNA]</scope>
    <source>
        <strain>ATCC BAA-308 / W83</strain>
    </source>
</reference>
<dbReference type="EC" id="3.1.26.11" evidence="1"/>
<dbReference type="EMBL" id="X95938">
    <property type="protein sequence ID" value="CAA65179.1"/>
    <property type="molecule type" value="Genomic_DNA"/>
</dbReference>
<dbReference type="EMBL" id="AE015924">
    <property type="protein sequence ID" value="AAQ65908.1"/>
    <property type="molecule type" value="Genomic_DNA"/>
</dbReference>
<dbReference type="RefSeq" id="WP_005873554.1">
    <property type="nucleotide sequence ID" value="NC_002950.2"/>
</dbReference>
<dbReference type="SMR" id="Q51834"/>
<dbReference type="STRING" id="242619.PG_0739"/>
<dbReference type="EnsemblBacteria" id="AAQ65908">
    <property type="protein sequence ID" value="AAQ65908"/>
    <property type="gene ID" value="PG_0739"/>
</dbReference>
<dbReference type="KEGG" id="pgi:PG_0739"/>
<dbReference type="eggNOG" id="COG1234">
    <property type="taxonomic scope" value="Bacteria"/>
</dbReference>
<dbReference type="HOGENOM" id="CLU_031317_2_1_10"/>
<dbReference type="Proteomes" id="UP000000588">
    <property type="component" value="Chromosome"/>
</dbReference>
<dbReference type="GO" id="GO:0042781">
    <property type="term" value="F:3'-tRNA processing endoribonuclease activity"/>
    <property type="evidence" value="ECO:0007669"/>
    <property type="project" value="UniProtKB-UniRule"/>
</dbReference>
<dbReference type="GO" id="GO:0008270">
    <property type="term" value="F:zinc ion binding"/>
    <property type="evidence" value="ECO:0007669"/>
    <property type="project" value="UniProtKB-UniRule"/>
</dbReference>
<dbReference type="CDD" id="cd07717">
    <property type="entry name" value="RNaseZ_ZiPD-like_MBL-fold"/>
    <property type="match status" value="1"/>
</dbReference>
<dbReference type="Gene3D" id="3.60.15.10">
    <property type="entry name" value="Ribonuclease Z/Hydroxyacylglutathione hydrolase-like"/>
    <property type="match status" value="1"/>
</dbReference>
<dbReference type="HAMAP" id="MF_01818">
    <property type="entry name" value="RNase_Z_BN"/>
    <property type="match status" value="1"/>
</dbReference>
<dbReference type="InterPro" id="IPR001279">
    <property type="entry name" value="Metallo-B-lactamas"/>
</dbReference>
<dbReference type="InterPro" id="IPR036866">
    <property type="entry name" value="RibonucZ/Hydroxyglut_hydro"/>
</dbReference>
<dbReference type="InterPro" id="IPR013471">
    <property type="entry name" value="RNase_Z/BN"/>
</dbReference>
<dbReference type="NCBIfam" id="NF000801">
    <property type="entry name" value="PRK00055.1-3"/>
    <property type="match status" value="1"/>
</dbReference>
<dbReference type="NCBIfam" id="TIGR02651">
    <property type="entry name" value="RNase_Z"/>
    <property type="match status" value="1"/>
</dbReference>
<dbReference type="PANTHER" id="PTHR46018">
    <property type="entry name" value="ZINC PHOSPHODIESTERASE ELAC PROTEIN 1"/>
    <property type="match status" value="1"/>
</dbReference>
<dbReference type="PANTHER" id="PTHR46018:SF2">
    <property type="entry name" value="ZINC PHOSPHODIESTERASE ELAC PROTEIN 1"/>
    <property type="match status" value="1"/>
</dbReference>
<dbReference type="Pfam" id="PF12706">
    <property type="entry name" value="Lactamase_B_2"/>
    <property type="match status" value="2"/>
</dbReference>
<dbReference type="SUPFAM" id="SSF56281">
    <property type="entry name" value="Metallo-hydrolase/oxidoreductase"/>
    <property type="match status" value="1"/>
</dbReference>
<accession>Q51834</accession>
<sequence>MAAFSVHILGCGSALPTTHHHPSSQVIDLRDKLYMIDCGEGVQRQFRHEKLHFGRLIHIFISHLHGDHCFGLPGFISTLGLLGRTGTLHVHGPEGIERFLSPILEQFCHRMPYQVEIHTIDASRHALVHEDKSVKVYSIPLSHRIPAVGYLFEEKCRARHLNKAAAEFYNIPLAEYPLIIEGSDYTTPDGRIIPNRHLTTPGTPPRRYAYCSDTEFCPSIVPIIQGVDLLYHEATFMEEDRARAKETFHSTAKEAAEIARQAGAKRLLIGHYSGRYKDVQGLLEEAQSVFKPTIAANERMRIDL</sequence>
<name>RNZ_PORGI</name>
<evidence type="ECO:0000255" key="1">
    <source>
        <dbReference type="HAMAP-Rule" id="MF_01818"/>
    </source>
</evidence>
<evidence type="ECO:0000305" key="2"/>